<sequence>MSPLAHLLALPVRAYRLIFSPWVGYNCRYQPTCSAYALEALQKHGGLIGAWLTLRRILRCHPWGKCGYDPVPERTRKP</sequence>
<comment type="function">
    <text evidence="1">Could be involved in insertion of integral membrane proteins into the membrane.</text>
</comment>
<comment type="subcellular location">
    <subcellularLocation>
        <location evidence="1">Cell inner membrane</location>
        <topology evidence="1">Peripheral membrane protein</topology>
        <orientation evidence="1">Cytoplasmic side</orientation>
    </subcellularLocation>
</comment>
<comment type="similarity">
    <text evidence="1">Belongs to the UPF0161 family.</text>
</comment>
<accession>Q16A98</accession>
<protein>
    <recommendedName>
        <fullName evidence="1">Putative membrane protein insertion efficiency factor</fullName>
    </recommendedName>
</protein>
<evidence type="ECO:0000255" key="1">
    <source>
        <dbReference type="HAMAP-Rule" id="MF_00386"/>
    </source>
</evidence>
<organism>
    <name type="scientific">Roseobacter denitrificans (strain ATCC 33942 / OCh 114)</name>
    <name type="common">Erythrobacter sp. (strain OCh 114)</name>
    <name type="synonym">Roseobacter denitrificans</name>
    <dbReference type="NCBI Taxonomy" id="375451"/>
    <lineage>
        <taxon>Bacteria</taxon>
        <taxon>Pseudomonadati</taxon>
        <taxon>Pseudomonadota</taxon>
        <taxon>Alphaproteobacteria</taxon>
        <taxon>Rhodobacterales</taxon>
        <taxon>Roseobacteraceae</taxon>
        <taxon>Roseobacter</taxon>
    </lineage>
</organism>
<dbReference type="EMBL" id="CP000362">
    <property type="protein sequence ID" value="ABG31095.1"/>
    <property type="molecule type" value="Genomic_DNA"/>
</dbReference>
<dbReference type="RefSeq" id="WP_011567715.1">
    <property type="nucleotide sequence ID" value="NC_008209.1"/>
</dbReference>
<dbReference type="STRING" id="375451.RD1_1458"/>
<dbReference type="KEGG" id="rde:RD1_1458"/>
<dbReference type="eggNOG" id="COG0759">
    <property type="taxonomic scope" value="Bacteria"/>
</dbReference>
<dbReference type="HOGENOM" id="CLU_144811_5_3_5"/>
<dbReference type="OrthoDB" id="9801753at2"/>
<dbReference type="Proteomes" id="UP000007029">
    <property type="component" value="Chromosome"/>
</dbReference>
<dbReference type="GO" id="GO:0005886">
    <property type="term" value="C:plasma membrane"/>
    <property type="evidence" value="ECO:0007669"/>
    <property type="project" value="UniProtKB-SubCell"/>
</dbReference>
<dbReference type="HAMAP" id="MF_00386">
    <property type="entry name" value="UPF0161_YidD"/>
    <property type="match status" value="1"/>
</dbReference>
<dbReference type="InterPro" id="IPR002696">
    <property type="entry name" value="Membr_insert_effic_factor_YidD"/>
</dbReference>
<dbReference type="NCBIfam" id="TIGR00278">
    <property type="entry name" value="membrane protein insertion efficiency factor YidD"/>
    <property type="match status" value="1"/>
</dbReference>
<dbReference type="PANTHER" id="PTHR33383">
    <property type="entry name" value="MEMBRANE PROTEIN INSERTION EFFICIENCY FACTOR-RELATED"/>
    <property type="match status" value="1"/>
</dbReference>
<dbReference type="PANTHER" id="PTHR33383:SF1">
    <property type="entry name" value="MEMBRANE PROTEIN INSERTION EFFICIENCY FACTOR-RELATED"/>
    <property type="match status" value="1"/>
</dbReference>
<dbReference type="Pfam" id="PF01809">
    <property type="entry name" value="YidD"/>
    <property type="match status" value="1"/>
</dbReference>
<dbReference type="SMART" id="SM01234">
    <property type="entry name" value="Haemolytic"/>
    <property type="match status" value="1"/>
</dbReference>
<keyword id="KW-0997">Cell inner membrane</keyword>
<keyword id="KW-1003">Cell membrane</keyword>
<keyword id="KW-0472">Membrane</keyword>
<keyword id="KW-1185">Reference proteome</keyword>
<gene>
    <name type="ordered locus">RD1_1458</name>
</gene>
<name>YIDD_ROSDO</name>
<reference key="1">
    <citation type="journal article" date="2007" name="J. Bacteriol.">
        <title>The complete genome sequence of Roseobacter denitrificans reveals a mixotrophic rather than photosynthetic metabolism.</title>
        <authorList>
            <person name="Swingley W.D."/>
            <person name="Sadekar S."/>
            <person name="Mastrian S.D."/>
            <person name="Matthies H.J."/>
            <person name="Hao J."/>
            <person name="Ramos H."/>
            <person name="Acharya C.R."/>
            <person name="Conrad A.L."/>
            <person name="Taylor H.L."/>
            <person name="Dejesa L.C."/>
            <person name="Shah M.K."/>
            <person name="O'Huallachain M.E."/>
            <person name="Lince M.T."/>
            <person name="Blankenship R.E."/>
            <person name="Beatty J.T."/>
            <person name="Touchman J.W."/>
        </authorList>
    </citation>
    <scope>NUCLEOTIDE SEQUENCE [LARGE SCALE GENOMIC DNA]</scope>
    <source>
        <strain>ATCC 33942 / OCh 114</strain>
    </source>
</reference>
<feature type="chain" id="PRO_0000253161" description="Putative membrane protein insertion efficiency factor">
    <location>
        <begin position="1"/>
        <end position="78"/>
    </location>
</feature>
<proteinExistence type="inferred from homology"/>